<evidence type="ECO:0000255" key="1">
    <source>
        <dbReference type="HAMAP-Rule" id="MF_01346"/>
    </source>
</evidence>
<feature type="chain" id="PRO_1000143445" description="ATP synthase subunit alpha">
    <location>
        <begin position="1"/>
        <end position="501"/>
    </location>
</feature>
<feature type="binding site" evidence="1">
    <location>
        <begin position="169"/>
        <end position="176"/>
    </location>
    <ligand>
        <name>ATP</name>
        <dbReference type="ChEBI" id="CHEBI:30616"/>
    </ligand>
</feature>
<feature type="site" description="Required for activity" evidence="1">
    <location>
        <position position="362"/>
    </location>
</feature>
<accession>B2IQX2</accession>
<protein>
    <recommendedName>
        <fullName evidence="1">ATP synthase subunit alpha</fullName>
        <ecNumber evidence="1">7.1.2.2</ecNumber>
    </recommendedName>
    <alternativeName>
        <fullName evidence="1">ATP synthase F1 sector subunit alpha</fullName>
    </alternativeName>
    <alternativeName>
        <fullName evidence="1">F-ATPase subunit alpha</fullName>
    </alternativeName>
</protein>
<reference key="1">
    <citation type="journal article" date="2009" name="BMC Genomics">
        <title>Genome evolution driven by host adaptations results in a more virulent and antimicrobial-resistant Streptococcus pneumoniae serotype 14.</title>
        <authorList>
            <person name="Ding F."/>
            <person name="Tang P."/>
            <person name="Hsu M.-H."/>
            <person name="Cui P."/>
            <person name="Hu S."/>
            <person name="Yu J."/>
            <person name="Chiu C.-H."/>
        </authorList>
    </citation>
    <scope>NUCLEOTIDE SEQUENCE [LARGE SCALE GENOMIC DNA]</scope>
    <source>
        <strain>CGSP14</strain>
    </source>
</reference>
<name>ATPA_STRPS</name>
<sequence>MAINAQEISALIKQQIENFKPNFDVTETGVVTYIGDGIARAHGLENVMSGELLNFENGSYGMAQNLESTDVGIIILGDFTDIREGDTIRRTGKIMEVPVGESLIGRVVDPLGRPVDGLGEIHTDKTRPVEAPAPGVMQRKSVSEPLQTGLKAIDALVPIGRGQRELIIGDRQTGKTTIAIDTILNQKDQDMICIYVAIGQKESTVRTQVETLRQYGALDYTIVVTASASQPSPLLFLAPYTGVAMAEEFMYQGKHVLIVYDDLSKQAVAYRELSLLLRRPPGREAFPGDVFYLHSRLLERSAKVSDELGGGSITALPFIETQAGDISAYIATNVISITDGQIFLGDGLFNAGIRPAIDAGSSVSRVGGSAQIKAMKKVAGTLRIDLASYRELEAFTKFGSDLDAATQAKLNRGRRTVEVLKQPVHKPLPVEKQVTILYALTHGFLDTVPVDDIVRFEEEFHAFFDAQHPEILETIRDTKDLPEEAVLDAAITEFLNQSSFQ</sequence>
<gene>
    <name evidence="1" type="primary">atpA</name>
    <name type="ordered locus">SPCG_1494</name>
</gene>
<dbReference type="EC" id="7.1.2.2" evidence="1"/>
<dbReference type="EMBL" id="CP001033">
    <property type="protein sequence ID" value="ACB90746.1"/>
    <property type="molecule type" value="Genomic_DNA"/>
</dbReference>
<dbReference type="RefSeq" id="WP_000996644.1">
    <property type="nucleotide sequence ID" value="NC_010582.1"/>
</dbReference>
<dbReference type="SMR" id="B2IQX2"/>
<dbReference type="KEGG" id="spw:SPCG_1494"/>
<dbReference type="HOGENOM" id="CLU_010091_2_1_9"/>
<dbReference type="GO" id="GO:0005886">
    <property type="term" value="C:plasma membrane"/>
    <property type="evidence" value="ECO:0007669"/>
    <property type="project" value="UniProtKB-SubCell"/>
</dbReference>
<dbReference type="GO" id="GO:0045259">
    <property type="term" value="C:proton-transporting ATP synthase complex"/>
    <property type="evidence" value="ECO:0007669"/>
    <property type="project" value="UniProtKB-KW"/>
</dbReference>
<dbReference type="GO" id="GO:0043531">
    <property type="term" value="F:ADP binding"/>
    <property type="evidence" value="ECO:0007669"/>
    <property type="project" value="TreeGrafter"/>
</dbReference>
<dbReference type="GO" id="GO:0005524">
    <property type="term" value="F:ATP binding"/>
    <property type="evidence" value="ECO:0007669"/>
    <property type="project" value="UniProtKB-UniRule"/>
</dbReference>
<dbReference type="GO" id="GO:0046933">
    <property type="term" value="F:proton-transporting ATP synthase activity, rotational mechanism"/>
    <property type="evidence" value="ECO:0007669"/>
    <property type="project" value="UniProtKB-UniRule"/>
</dbReference>
<dbReference type="CDD" id="cd18113">
    <property type="entry name" value="ATP-synt_F1_alpha_C"/>
    <property type="match status" value="1"/>
</dbReference>
<dbReference type="CDD" id="cd18116">
    <property type="entry name" value="ATP-synt_F1_alpha_N"/>
    <property type="match status" value="1"/>
</dbReference>
<dbReference type="CDD" id="cd01132">
    <property type="entry name" value="F1-ATPase_alpha_CD"/>
    <property type="match status" value="1"/>
</dbReference>
<dbReference type="FunFam" id="1.20.150.20:FF:000001">
    <property type="entry name" value="ATP synthase subunit alpha"/>
    <property type="match status" value="1"/>
</dbReference>
<dbReference type="FunFam" id="2.40.30.20:FF:000001">
    <property type="entry name" value="ATP synthase subunit alpha"/>
    <property type="match status" value="1"/>
</dbReference>
<dbReference type="FunFam" id="3.40.50.300:FF:000002">
    <property type="entry name" value="ATP synthase subunit alpha"/>
    <property type="match status" value="1"/>
</dbReference>
<dbReference type="Gene3D" id="2.40.30.20">
    <property type="match status" value="1"/>
</dbReference>
<dbReference type="Gene3D" id="1.20.150.20">
    <property type="entry name" value="ATP synthase alpha/beta chain, C-terminal domain"/>
    <property type="match status" value="1"/>
</dbReference>
<dbReference type="Gene3D" id="3.40.50.300">
    <property type="entry name" value="P-loop containing nucleotide triphosphate hydrolases"/>
    <property type="match status" value="1"/>
</dbReference>
<dbReference type="HAMAP" id="MF_01346">
    <property type="entry name" value="ATP_synth_alpha_bact"/>
    <property type="match status" value="1"/>
</dbReference>
<dbReference type="InterPro" id="IPR023366">
    <property type="entry name" value="ATP_synth_asu-like_sf"/>
</dbReference>
<dbReference type="InterPro" id="IPR000793">
    <property type="entry name" value="ATP_synth_asu_C"/>
</dbReference>
<dbReference type="InterPro" id="IPR038376">
    <property type="entry name" value="ATP_synth_asu_C_sf"/>
</dbReference>
<dbReference type="InterPro" id="IPR033732">
    <property type="entry name" value="ATP_synth_F1_a_nt-bd_dom"/>
</dbReference>
<dbReference type="InterPro" id="IPR005294">
    <property type="entry name" value="ATP_synth_F1_asu"/>
</dbReference>
<dbReference type="InterPro" id="IPR004100">
    <property type="entry name" value="ATPase_F1/V1/A1_a/bsu_N"/>
</dbReference>
<dbReference type="InterPro" id="IPR036121">
    <property type="entry name" value="ATPase_F1/V1/A1_a/bsu_N_sf"/>
</dbReference>
<dbReference type="InterPro" id="IPR000194">
    <property type="entry name" value="ATPase_F1/V1/A1_a/bsu_nucl-bd"/>
</dbReference>
<dbReference type="InterPro" id="IPR027417">
    <property type="entry name" value="P-loop_NTPase"/>
</dbReference>
<dbReference type="NCBIfam" id="TIGR00962">
    <property type="entry name" value="atpA"/>
    <property type="match status" value="1"/>
</dbReference>
<dbReference type="NCBIfam" id="NF009884">
    <property type="entry name" value="PRK13343.1"/>
    <property type="match status" value="1"/>
</dbReference>
<dbReference type="PANTHER" id="PTHR48082">
    <property type="entry name" value="ATP SYNTHASE SUBUNIT ALPHA, MITOCHONDRIAL"/>
    <property type="match status" value="1"/>
</dbReference>
<dbReference type="PANTHER" id="PTHR48082:SF2">
    <property type="entry name" value="ATP SYNTHASE SUBUNIT ALPHA, MITOCHONDRIAL"/>
    <property type="match status" value="1"/>
</dbReference>
<dbReference type="Pfam" id="PF00006">
    <property type="entry name" value="ATP-synt_ab"/>
    <property type="match status" value="1"/>
</dbReference>
<dbReference type="Pfam" id="PF00306">
    <property type="entry name" value="ATP-synt_ab_C"/>
    <property type="match status" value="1"/>
</dbReference>
<dbReference type="Pfam" id="PF02874">
    <property type="entry name" value="ATP-synt_ab_N"/>
    <property type="match status" value="1"/>
</dbReference>
<dbReference type="PIRSF" id="PIRSF039088">
    <property type="entry name" value="F_ATPase_subunit_alpha"/>
    <property type="match status" value="1"/>
</dbReference>
<dbReference type="SUPFAM" id="SSF47917">
    <property type="entry name" value="C-terminal domain of alpha and beta subunits of F1 ATP synthase"/>
    <property type="match status" value="1"/>
</dbReference>
<dbReference type="SUPFAM" id="SSF50615">
    <property type="entry name" value="N-terminal domain of alpha and beta subunits of F1 ATP synthase"/>
    <property type="match status" value="1"/>
</dbReference>
<dbReference type="SUPFAM" id="SSF52540">
    <property type="entry name" value="P-loop containing nucleoside triphosphate hydrolases"/>
    <property type="match status" value="1"/>
</dbReference>
<comment type="function">
    <text evidence="1">Produces ATP from ADP in the presence of a proton gradient across the membrane. The alpha chain is a regulatory subunit.</text>
</comment>
<comment type="catalytic activity">
    <reaction evidence="1">
        <text>ATP + H2O + 4 H(+)(in) = ADP + phosphate + 5 H(+)(out)</text>
        <dbReference type="Rhea" id="RHEA:57720"/>
        <dbReference type="ChEBI" id="CHEBI:15377"/>
        <dbReference type="ChEBI" id="CHEBI:15378"/>
        <dbReference type="ChEBI" id="CHEBI:30616"/>
        <dbReference type="ChEBI" id="CHEBI:43474"/>
        <dbReference type="ChEBI" id="CHEBI:456216"/>
        <dbReference type="EC" id="7.1.2.2"/>
    </reaction>
</comment>
<comment type="subunit">
    <text evidence="1">F-type ATPases have 2 components, CF(1) - the catalytic core - and CF(0) - the membrane proton channel. CF(1) has five subunits: alpha(3), beta(3), gamma(1), delta(1), epsilon(1). CF(0) has three main subunits: a(1), b(2) and c(9-12). The alpha and beta chains form an alternating ring which encloses part of the gamma chain. CF(1) is attached to CF(0) by a central stalk formed by the gamma and epsilon chains, while a peripheral stalk is formed by the delta and b chains.</text>
</comment>
<comment type="subcellular location">
    <subcellularLocation>
        <location evidence="1">Cell membrane</location>
        <topology evidence="1">Peripheral membrane protein</topology>
    </subcellularLocation>
</comment>
<comment type="similarity">
    <text evidence="1">Belongs to the ATPase alpha/beta chains family.</text>
</comment>
<organism>
    <name type="scientific">Streptococcus pneumoniae (strain CGSP14)</name>
    <dbReference type="NCBI Taxonomy" id="516950"/>
    <lineage>
        <taxon>Bacteria</taxon>
        <taxon>Bacillati</taxon>
        <taxon>Bacillota</taxon>
        <taxon>Bacilli</taxon>
        <taxon>Lactobacillales</taxon>
        <taxon>Streptococcaceae</taxon>
        <taxon>Streptococcus</taxon>
    </lineage>
</organism>
<proteinExistence type="inferred from homology"/>
<keyword id="KW-0066">ATP synthesis</keyword>
<keyword id="KW-0067">ATP-binding</keyword>
<keyword id="KW-1003">Cell membrane</keyword>
<keyword id="KW-0139">CF(1)</keyword>
<keyword id="KW-0375">Hydrogen ion transport</keyword>
<keyword id="KW-0406">Ion transport</keyword>
<keyword id="KW-0472">Membrane</keyword>
<keyword id="KW-0547">Nucleotide-binding</keyword>
<keyword id="KW-1278">Translocase</keyword>
<keyword id="KW-0813">Transport</keyword>